<sequence>MIHPSYVELMKVVNNNVEIGEEPVVNSRYSIVIAAAKRARQIIDGAEPLIAHPKCNKPLSIAVEELYTGAVRIVSDDEDLNEGEEA</sequence>
<reference key="1">
    <citation type="journal article" date="2009" name="Proc. Natl. Acad. Sci. U.S.A.">
        <title>Characterizing a model human gut microbiota composed of members of its two dominant bacterial phyla.</title>
        <authorList>
            <person name="Mahowald M.A."/>
            <person name="Rey F.E."/>
            <person name="Seedorf H."/>
            <person name="Turnbaugh P.J."/>
            <person name="Fulton R.S."/>
            <person name="Wollam A."/>
            <person name="Shah N."/>
            <person name="Wang C."/>
            <person name="Magrini V."/>
            <person name="Wilson R.K."/>
            <person name="Cantarel B.L."/>
            <person name="Coutinho P.M."/>
            <person name="Henrissat B."/>
            <person name="Crock L.W."/>
            <person name="Russell A."/>
            <person name="Verberkmoes N.C."/>
            <person name="Hettich R.L."/>
            <person name="Gordon J.I."/>
        </authorList>
    </citation>
    <scope>NUCLEOTIDE SEQUENCE [LARGE SCALE GENOMIC DNA]</scope>
    <source>
        <strain>ATCC 33656 / DSM 3377 / JCM 17463 / KCTC 5835 / LMG 30912 / VPI 0990</strain>
    </source>
</reference>
<evidence type="ECO:0000255" key="1">
    <source>
        <dbReference type="HAMAP-Rule" id="MF_00366"/>
    </source>
</evidence>
<organism>
    <name type="scientific">Agathobacter rectalis (strain ATCC 33656 / DSM 3377 / JCM 17463 / KCTC 5835 / VPI 0990)</name>
    <name type="common">Eubacterium rectale</name>
    <dbReference type="NCBI Taxonomy" id="515619"/>
    <lineage>
        <taxon>Bacteria</taxon>
        <taxon>Bacillati</taxon>
        <taxon>Bacillota</taxon>
        <taxon>Clostridia</taxon>
        <taxon>Lachnospirales</taxon>
        <taxon>Lachnospiraceae</taxon>
        <taxon>Agathobacter</taxon>
    </lineage>
</organism>
<keyword id="KW-0240">DNA-directed RNA polymerase</keyword>
<keyword id="KW-0548">Nucleotidyltransferase</keyword>
<keyword id="KW-0804">Transcription</keyword>
<keyword id="KW-0808">Transferase</keyword>
<gene>
    <name evidence="1" type="primary">rpoZ</name>
    <name type="ordered locus">EUBREC_1674</name>
</gene>
<accession>C4Z9X7</accession>
<feature type="chain" id="PRO_1000205517" description="DNA-directed RNA polymerase subunit omega">
    <location>
        <begin position="1"/>
        <end position="86"/>
    </location>
</feature>
<proteinExistence type="inferred from homology"/>
<comment type="function">
    <text evidence="1">Promotes RNA polymerase assembly. Latches the N- and C-terminal regions of the beta' subunit thereby facilitating its interaction with the beta and alpha subunits.</text>
</comment>
<comment type="catalytic activity">
    <reaction evidence="1">
        <text>RNA(n) + a ribonucleoside 5'-triphosphate = RNA(n+1) + diphosphate</text>
        <dbReference type="Rhea" id="RHEA:21248"/>
        <dbReference type="Rhea" id="RHEA-COMP:14527"/>
        <dbReference type="Rhea" id="RHEA-COMP:17342"/>
        <dbReference type="ChEBI" id="CHEBI:33019"/>
        <dbReference type="ChEBI" id="CHEBI:61557"/>
        <dbReference type="ChEBI" id="CHEBI:140395"/>
        <dbReference type="EC" id="2.7.7.6"/>
    </reaction>
</comment>
<comment type="subunit">
    <text evidence="1">The RNAP catalytic core consists of 2 alpha, 1 beta, 1 beta' and 1 omega subunit. When a sigma factor is associated with the core the holoenzyme is formed, which can initiate transcription.</text>
</comment>
<comment type="similarity">
    <text evidence="1">Belongs to the RNA polymerase subunit omega family.</text>
</comment>
<protein>
    <recommendedName>
        <fullName evidence="1">DNA-directed RNA polymerase subunit omega</fullName>
        <shortName evidence="1">RNAP omega subunit</shortName>
        <ecNumber evidence="1">2.7.7.6</ecNumber>
    </recommendedName>
    <alternativeName>
        <fullName evidence="1">RNA polymerase omega subunit</fullName>
    </alternativeName>
    <alternativeName>
        <fullName evidence="1">Transcriptase subunit omega</fullName>
    </alternativeName>
</protein>
<dbReference type="EC" id="2.7.7.6" evidence="1"/>
<dbReference type="EMBL" id="CP001107">
    <property type="protein sequence ID" value="ACR75418.1"/>
    <property type="molecule type" value="Genomic_DNA"/>
</dbReference>
<dbReference type="RefSeq" id="WP_012742516.1">
    <property type="nucleotide sequence ID" value="NC_012781.1"/>
</dbReference>
<dbReference type="SMR" id="C4Z9X7"/>
<dbReference type="STRING" id="515619.EUBREC_1674"/>
<dbReference type="PaxDb" id="515619-EUBREC_1674"/>
<dbReference type="GeneID" id="86988477"/>
<dbReference type="KEGG" id="ere:EUBREC_1674"/>
<dbReference type="HOGENOM" id="CLU_153189_1_0_9"/>
<dbReference type="Proteomes" id="UP000001477">
    <property type="component" value="Chromosome"/>
</dbReference>
<dbReference type="GO" id="GO:0000428">
    <property type="term" value="C:DNA-directed RNA polymerase complex"/>
    <property type="evidence" value="ECO:0007669"/>
    <property type="project" value="UniProtKB-KW"/>
</dbReference>
<dbReference type="GO" id="GO:0003677">
    <property type="term" value="F:DNA binding"/>
    <property type="evidence" value="ECO:0007669"/>
    <property type="project" value="UniProtKB-UniRule"/>
</dbReference>
<dbReference type="GO" id="GO:0003899">
    <property type="term" value="F:DNA-directed RNA polymerase activity"/>
    <property type="evidence" value="ECO:0007669"/>
    <property type="project" value="UniProtKB-UniRule"/>
</dbReference>
<dbReference type="GO" id="GO:0006351">
    <property type="term" value="P:DNA-templated transcription"/>
    <property type="evidence" value="ECO:0007669"/>
    <property type="project" value="UniProtKB-UniRule"/>
</dbReference>
<dbReference type="Gene3D" id="3.90.940.10">
    <property type="match status" value="1"/>
</dbReference>
<dbReference type="HAMAP" id="MF_00366">
    <property type="entry name" value="RNApol_bact_RpoZ"/>
    <property type="match status" value="1"/>
</dbReference>
<dbReference type="InterPro" id="IPR003716">
    <property type="entry name" value="DNA-dir_RNA_pol_omega"/>
</dbReference>
<dbReference type="InterPro" id="IPR006110">
    <property type="entry name" value="Pol_omega/Rpo6/RPB6"/>
</dbReference>
<dbReference type="InterPro" id="IPR036161">
    <property type="entry name" value="RPB6/omega-like_sf"/>
</dbReference>
<dbReference type="NCBIfam" id="TIGR00690">
    <property type="entry name" value="rpoZ"/>
    <property type="match status" value="1"/>
</dbReference>
<dbReference type="PANTHER" id="PTHR34476">
    <property type="entry name" value="DNA-DIRECTED RNA POLYMERASE SUBUNIT OMEGA"/>
    <property type="match status" value="1"/>
</dbReference>
<dbReference type="PANTHER" id="PTHR34476:SF1">
    <property type="entry name" value="DNA-DIRECTED RNA POLYMERASE SUBUNIT OMEGA"/>
    <property type="match status" value="1"/>
</dbReference>
<dbReference type="Pfam" id="PF01192">
    <property type="entry name" value="RNA_pol_Rpb6"/>
    <property type="match status" value="1"/>
</dbReference>
<dbReference type="SMART" id="SM01409">
    <property type="entry name" value="RNA_pol_Rpb6"/>
    <property type="match status" value="1"/>
</dbReference>
<dbReference type="SUPFAM" id="SSF63562">
    <property type="entry name" value="RPB6/omega subunit-like"/>
    <property type="match status" value="1"/>
</dbReference>
<name>RPOZ_AGARV</name>